<reference key="1">
    <citation type="journal article" date="2008" name="Genome Res.">
        <title>Genome sequence of the beta-rhizobium Cupriavidus taiwanensis and comparative genomics of rhizobia.</title>
        <authorList>
            <person name="Amadou C."/>
            <person name="Pascal G."/>
            <person name="Mangenot S."/>
            <person name="Glew M."/>
            <person name="Bontemps C."/>
            <person name="Capela D."/>
            <person name="Carrere S."/>
            <person name="Cruveiller S."/>
            <person name="Dossat C."/>
            <person name="Lajus A."/>
            <person name="Marchetti M."/>
            <person name="Poinsot V."/>
            <person name="Rouy Z."/>
            <person name="Servin B."/>
            <person name="Saad M."/>
            <person name="Schenowitz C."/>
            <person name="Barbe V."/>
            <person name="Batut J."/>
            <person name="Medigue C."/>
            <person name="Masson-Boivin C."/>
        </authorList>
    </citation>
    <scope>NUCLEOTIDE SEQUENCE [LARGE SCALE GENOMIC DNA]</scope>
    <source>
        <strain>DSM 17343 / BCRC 17206 / CCUG 44338 / CIP 107171 / LMG 19424 / R1</strain>
    </source>
</reference>
<protein>
    <recommendedName>
        <fullName evidence="1">Acetyl-coenzyme A carboxylase carboxyl transferase subunit beta</fullName>
        <shortName evidence="1">ACCase subunit beta</shortName>
        <shortName evidence="1">Acetyl-CoA carboxylase carboxyltransferase subunit beta</shortName>
        <ecNumber evidence="1">2.1.3.15</ecNumber>
    </recommendedName>
</protein>
<gene>
    <name evidence="1" type="primary">accD</name>
    <name type="ordered locus">RALTA_A2109</name>
</gene>
<name>ACCD_CUPTR</name>
<organism>
    <name type="scientific">Cupriavidus taiwanensis (strain DSM 17343 / BCRC 17206 / CCUG 44338 / CIP 107171 / LMG 19424 / R1)</name>
    <name type="common">Ralstonia taiwanensis (strain LMG 19424)</name>
    <dbReference type="NCBI Taxonomy" id="977880"/>
    <lineage>
        <taxon>Bacteria</taxon>
        <taxon>Pseudomonadati</taxon>
        <taxon>Pseudomonadota</taxon>
        <taxon>Betaproteobacteria</taxon>
        <taxon>Burkholderiales</taxon>
        <taxon>Burkholderiaceae</taxon>
        <taxon>Cupriavidus</taxon>
    </lineage>
</organism>
<sequence length="290" mass="31701">MSWLDKLLPPKIQQTDPSTRKGIPEGLWVKCPSCESTLYRTDVEANLHVCPKCDHHMRISARARLDALLDAEGRYEIGQEIVPVDALKFKDSKKYPDRIKAAMEDTGETDAMVVMGGAIHTIPVVASCFEFEFMGGSMGSVVGERFVRGAQAALEQKVPFICFTATGGARMQESLLSLLQMAKTTAMLNQLSASKLPFISVLTDPTMGGVSASFAFLGDVVIAEPKALIGFAGPRVIEQTVREKLPEGFQRSEFLLQKGAIDMIVDRRKMRAELAQLLALLQKQPADAVA</sequence>
<feature type="chain" id="PRO_0000358978" description="Acetyl-coenzyme A carboxylase carboxyl transferase subunit beta">
    <location>
        <begin position="1"/>
        <end position="290"/>
    </location>
</feature>
<feature type="domain" description="CoA carboxyltransferase N-terminal" evidence="2">
    <location>
        <begin position="27"/>
        <end position="290"/>
    </location>
</feature>
<feature type="zinc finger region" description="C4-type" evidence="1">
    <location>
        <begin position="31"/>
        <end position="53"/>
    </location>
</feature>
<feature type="binding site" evidence="1">
    <location>
        <position position="31"/>
    </location>
    <ligand>
        <name>Zn(2+)</name>
        <dbReference type="ChEBI" id="CHEBI:29105"/>
    </ligand>
</feature>
<feature type="binding site" evidence="1">
    <location>
        <position position="34"/>
    </location>
    <ligand>
        <name>Zn(2+)</name>
        <dbReference type="ChEBI" id="CHEBI:29105"/>
    </ligand>
</feature>
<feature type="binding site" evidence="1">
    <location>
        <position position="50"/>
    </location>
    <ligand>
        <name>Zn(2+)</name>
        <dbReference type="ChEBI" id="CHEBI:29105"/>
    </ligand>
</feature>
<feature type="binding site" evidence="1">
    <location>
        <position position="53"/>
    </location>
    <ligand>
        <name>Zn(2+)</name>
        <dbReference type="ChEBI" id="CHEBI:29105"/>
    </ligand>
</feature>
<accession>B3R112</accession>
<dbReference type="EC" id="2.1.3.15" evidence="1"/>
<dbReference type="EMBL" id="CU633749">
    <property type="protein sequence ID" value="CAQ70046.1"/>
    <property type="molecule type" value="Genomic_DNA"/>
</dbReference>
<dbReference type="RefSeq" id="WP_012353352.1">
    <property type="nucleotide sequence ID" value="NC_010528.1"/>
</dbReference>
<dbReference type="SMR" id="B3R112"/>
<dbReference type="GeneID" id="29762792"/>
<dbReference type="KEGG" id="cti:RALTA_A2109"/>
<dbReference type="eggNOG" id="COG0777">
    <property type="taxonomic scope" value="Bacteria"/>
</dbReference>
<dbReference type="HOGENOM" id="CLU_015486_1_0_4"/>
<dbReference type="BioCyc" id="CTAI977880:RALTA_RS10240-MONOMER"/>
<dbReference type="UniPathway" id="UPA00655">
    <property type="reaction ID" value="UER00711"/>
</dbReference>
<dbReference type="Proteomes" id="UP000001692">
    <property type="component" value="Chromosome 1"/>
</dbReference>
<dbReference type="GO" id="GO:0009329">
    <property type="term" value="C:acetate CoA-transferase complex"/>
    <property type="evidence" value="ECO:0007669"/>
    <property type="project" value="TreeGrafter"/>
</dbReference>
<dbReference type="GO" id="GO:0003989">
    <property type="term" value="F:acetyl-CoA carboxylase activity"/>
    <property type="evidence" value="ECO:0007669"/>
    <property type="project" value="InterPro"/>
</dbReference>
<dbReference type="GO" id="GO:0005524">
    <property type="term" value="F:ATP binding"/>
    <property type="evidence" value="ECO:0007669"/>
    <property type="project" value="UniProtKB-KW"/>
</dbReference>
<dbReference type="GO" id="GO:0016743">
    <property type="term" value="F:carboxyl- or carbamoyltransferase activity"/>
    <property type="evidence" value="ECO:0007669"/>
    <property type="project" value="UniProtKB-UniRule"/>
</dbReference>
<dbReference type="GO" id="GO:0008270">
    <property type="term" value="F:zinc ion binding"/>
    <property type="evidence" value="ECO:0007669"/>
    <property type="project" value="UniProtKB-UniRule"/>
</dbReference>
<dbReference type="GO" id="GO:0006633">
    <property type="term" value="P:fatty acid biosynthetic process"/>
    <property type="evidence" value="ECO:0007669"/>
    <property type="project" value="UniProtKB-KW"/>
</dbReference>
<dbReference type="GO" id="GO:2001295">
    <property type="term" value="P:malonyl-CoA biosynthetic process"/>
    <property type="evidence" value="ECO:0007669"/>
    <property type="project" value="UniProtKB-UniRule"/>
</dbReference>
<dbReference type="Gene3D" id="3.90.226.10">
    <property type="entry name" value="2-enoyl-CoA Hydratase, Chain A, domain 1"/>
    <property type="match status" value="1"/>
</dbReference>
<dbReference type="HAMAP" id="MF_01395">
    <property type="entry name" value="AcetylCoA_CT_beta"/>
    <property type="match status" value="1"/>
</dbReference>
<dbReference type="InterPro" id="IPR034733">
    <property type="entry name" value="AcCoA_carboxyl_beta"/>
</dbReference>
<dbReference type="InterPro" id="IPR000438">
    <property type="entry name" value="Acetyl_CoA_COase_Trfase_b_su"/>
</dbReference>
<dbReference type="InterPro" id="IPR029045">
    <property type="entry name" value="ClpP/crotonase-like_dom_sf"/>
</dbReference>
<dbReference type="InterPro" id="IPR011762">
    <property type="entry name" value="COA_CT_N"/>
</dbReference>
<dbReference type="InterPro" id="IPR041010">
    <property type="entry name" value="Znf-ACC"/>
</dbReference>
<dbReference type="NCBIfam" id="TIGR00515">
    <property type="entry name" value="accD"/>
    <property type="match status" value="1"/>
</dbReference>
<dbReference type="PANTHER" id="PTHR42995">
    <property type="entry name" value="ACETYL-COENZYME A CARBOXYLASE CARBOXYL TRANSFERASE SUBUNIT BETA, CHLOROPLASTIC"/>
    <property type="match status" value="1"/>
</dbReference>
<dbReference type="PANTHER" id="PTHR42995:SF5">
    <property type="entry name" value="ACETYL-COENZYME A CARBOXYLASE CARBOXYL TRANSFERASE SUBUNIT BETA, CHLOROPLASTIC"/>
    <property type="match status" value="1"/>
</dbReference>
<dbReference type="Pfam" id="PF01039">
    <property type="entry name" value="Carboxyl_trans"/>
    <property type="match status" value="1"/>
</dbReference>
<dbReference type="Pfam" id="PF17848">
    <property type="entry name" value="Zn_ribbon_ACC"/>
    <property type="match status" value="1"/>
</dbReference>
<dbReference type="PRINTS" id="PR01070">
    <property type="entry name" value="ACCCTRFRASEB"/>
</dbReference>
<dbReference type="SUPFAM" id="SSF52096">
    <property type="entry name" value="ClpP/crotonase"/>
    <property type="match status" value="1"/>
</dbReference>
<dbReference type="PROSITE" id="PS50980">
    <property type="entry name" value="COA_CT_NTER"/>
    <property type="match status" value="1"/>
</dbReference>
<evidence type="ECO:0000255" key="1">
    <source>
        <dbReference type="HAMAP-Rule" id="MF_01395"/>
    </source>
</evidence>
<evidence type="ECO:0000255" key="2">
    <source>
        <dbReference type="PROSITE-ProRule" id="PRU01136"/>
    </source>
</evidence>
<comment type="function">
    <text evidence="1">Component of the acetyl coenzyme A carboxylase (ACC) complex. Biotin carboxylase (BC) catalyzes the carboxylation of biotin on its carrier protein (BCCP) and then the CO(2) group is transferred by the transcarboxylase to acetyl-CoA to form malonyl-CoA.</text>
</comment>
<comment type="catalytic activity">
    <reaction evidence="1">
        <text>N(6)-carboxybiotinyl-L-lysyl-[protein] + acetyl-CoA = N(6)-biotinyl-L-lysyl-[protein] + malonyl-CoA</text>
        <dbReference type="Rhea" id="RHEA:54728"/>
        <dbReference type="Rhea" id="RHEA-COMP:10505"/>
        <dbReference type="Rhea" id="RHEA-COMP:10506"/>
        <dbReference type="ChEBI" id="CHEBI:57288"/>
        <dbReference type="ChEBI" id="CHEBI:57384"/>
        <dbReference type="ChEBI" id="CHEBI:83144"/>
        <dbReference type="ChEBI" id="CHEBI:83145"/>
        <dbReference type="EC" id="2.1.3.15"/>
    </reaction>
</comment>
<comment type="cofactor">
    <cofactor evidence="1">
        <name>Zn(2+)</name>
        <dbReference type="ChEBI" id="CHEBI:29105"/>
    </cofactor>
    <text evidence="1">Binds 1 zinc ion per subunit.</text>
</comment>
<comment type="pathway">
    <text evidence="1">Lipid metabolism; malonyl-CoA biosynthesis; malonyl-CoA from acetyl-CoA: step 1/1.</text>
</comment>
<comment type="subunit">
    <text evidence="1">Acetyl-CoA carboxylase is a heterohexamer composed of biotin carboxyl carrier protein (AccB), biotin carboxylase (AccC) and two subunits each of ACCase subunit alpha (AccA) and ACCase subunit beta (AccD).</text>
</comment>
<comment type="subcellular location">
    <subcellularLocation>
        <location evidence="1">Cytoplasm</location>
    </subcellularLocation>
</comment>
<comment type="similarity">
    <text evidence="1">Belongs to the AccD/PCCB family.</text>
</comment>
<proteinExistence type="inferred from homology"/>
<keyword id="KW-0067">ATP-binding</keyword>
<keyword id="KW-0963">Cytoplasm</keyword>
<keyword id="KW-0275">Fatty acid biosynthesis</keyword>
<keyword id="KW-0276">Fatty acid metabolism</keyword>
<keyword id="KW-0444">Lipid biosynthesis</keyword>
<keyword id="KW-0443">Lipid metabolism</keyword>
<keyword id="KW-0479">Metal-binding</keyword>
<keyword id="KW-0547">Nucleotide-binding</keyword>
<keyword id="KW-0808">Transferase</keyword>
<keyword id="KW-0862">Zinc</keyword>
<keyword id="KW-0863">Zinc-finger</keyword>